<protein>
    <recommendedName>
        <fullName evidence="1">Chaperonin GroEL</fullName>
        <ecNumber evidence="1">5.6.1.7</ecNumber>
    </recommendedName>
    <alternativeName>
        <fullName evidence="1">60 kDa chaperonin</fullName>
    </alternativeName>
    <alternativeName>
        <fullName evidence="1">Chaperonin-60</fullName>
        <shortName evidence="1">Cpn60</shortName>
    </alternativeName>
</protein>
<reference key="1">
    <citation type="submission" date="2008-05" db="EMBL/GenBank/DDBJ databases">
        <title>Genome sequence of Helicobacter pylori from the remote Amazon: traces of Asian ancestry of the first Americans.</title>
        <authorList>
            <person name="Kersulyte D."/>
            <person name="Kalia A."/>
            <person name="Gilman R.H."/>
            <person name="Berg D.E."/>
        </authorList>
    </citation>
    <scope>NUCLEOTIDE SEQUENCE [LARGE SCALE GENOMIC DNA]</scope>
    <source>
        <strain>Shi470</strain>
    </source>
</reference>
<comment type="function">
    <text evidence="1">Together with its co-chaperonin GroES, plays an essential role in assisting protein folding. The GroEL-GroES system forms a nano-cage that allows encapsulation of the non-native substrate proteins and provides a physical environment optimized to promote and accelerate protein folding.</text>
</comment>
<comment type="catalytic activity">
    <reaction evidence="1">
        <text>ATP + H2O + a folded polypeptide = ADP + phosphate + an unfolded polypeptide.</text>
        <dbReference type="EC" id="5.6.1.7"/>
    </reaction>
</comment>
<comment type="subunit">
    <text evidence="1">Forms a cylinder of 14 subunits composed of two heptameric rings stacked back-to-back. Interacts with the co-chaperonin GroES.</text>
</comment>
<comment type="subcellular location">
    <subcellularLocation>
        <location evidence="1">Cytoplasm</location>
    </subcellularLocation>
</comment>
<comment type="similarity">
    <text evidence="1">Belongs to the chaperonin (HSP60) family.</text>
</comment>
<sequence length="546" mass="58293">MAKEIKFSDSARNLLFEGVRQLHDAVKVTMGPRGRNVLIQKSYGAPSITKDGVSVAKEIELSCPVANMGAQLVKEVASKTADAAGDGTTTATVLAYSIFKEGLRNITAGANPIEVKRGMDKAAEAIINELKKASKKVGGKEEITQVATISANSDHNIGKLIADAMEKVGKDGVITVEEAKGIEDELDVVEGMQFDRGYLSPYFVTNAEKMTAQLDNAYILLTDKKISSMKDILPLLEKTMKEGKPLLIIAEDIEGEALTTLVVNKLRGVLNIAAVKAPGFGDRRKEMLKDIAVLTGGQVISEELGLTLENAEVEFLGKAGRIVIDKDNTTIVDGKGHSHDVKDRVAQIKTQIASTTSDYDKEKLQERLAKLSGGVAVIKVGAASEVEMKEKKDRVDDALSATKAAVEEGIVIGGGAALIRAAQKVHLNLHDDEKVGYEIIMRAIKAPLAQIAINAGYDGGVVVNEVQKHEGHFGFNASNGKYVDMFKEGIIDPLKVERIALQNAVSVSSLLLTTEATVHEIKEEKATPAMPDMGGMGGMGGMGGMM</sequence>
<gene>
    <name evidence="1" type="primary">groEL</name>
    <name evidence="1" type="synonym">groL</name>
    <name type="ordered locus">HPSH_00050</name>
</gene>
<feature type="chain" id="PRO_1000130025" description="Chaperonin GroEL">
    <location>
        <begin position="1"/>
        <end position="546"/>
    </location>
</feature>
<feature type="binding site" evidence="1">
    <location>
        <begin position="29"/>
        <end position="32"/>
    </location>
    <ligand>
        <name>ATP</name>
        <dbReference type="ChEBI" id="CHEBI:30616"/>
    </ligand>
</feature>
<feature type="binding site" evidence="1">
    <location>
        <position position="50"/>
    </location>
    <ligand>
        <name>ATP</name>
        <dbReference type="ChEBI" id="CHEBI:30616"/>
    </ligand>
</feature>
<feature type="binding site" evidence="1">
    <location>
        <begin position="86"/>
        <end position="90"/>
    </location>
    <ligand>
        <name>ATP</name>
        <dbReference type="ChEBI" id="CHEBI:30616"/>
    </ligand>
</feature>
<feature type="binding site" evidence="1">
    <location>
        <position position="414"/>
    </location>
    <ligand>
        <name>ATP</name>
        <dbReference type="ChEBI" id="CHEBI:30616"/>
    </ligand>
</feature>
<feature type="binding site" evidence="1">
    <location>
        <position position="492"/>
    </location>
    <ligand>
        <name>ATP</name>
        <dbReference type="ChEBI" id="CHEBI:30616"/>
    </ligand>
</feature>
<accession>B2UW12</accession>
<keyword id="KW-0067">ATP-binding</keyword>
<keyword id="KW-0143">Chaperone</keyword>
<keyword id="KW-0963">Cytoplasm</keyword>
<keyword id="KW-0413">Isomerase</keyword>
<keyword id="KW-0547">Nucleotide-binding</keyword>
<organism>
    <name type="scientific">Helicobacter pylori (strain Shi470)</name>
    <dbReference type="NCBI Taxonomy" id="512562"/>
    <lineage>
        <taxon>Bacteria</taxon>
        <taxon>Pseudomonadati</taxon>
        <taxon>Campylobacterota</taxon>
        <taxon>Epsilonproteobacteria</taxon>
        <taxon>Campylobacterales</taxon>
        <taxon>Helicobacteraceae</taxon>
        <taxon>Helicobacter</taxon>
    </lineage>
</organism>
<proteinExistence type="inferred from homology"/>
<name>CH60_HELPS</name>
<evidence type="ECO:0000255" key="1">
    <source>
        <dbReference type="HAMAP-Rule" id="MF_00600"/>
    </source>
</evidence>
<dbReference type="EC" id="5.6.1.7" evidence="1"/>
<dbReference type="EMBL" id="CP001072">
    <property type="protein sequence ID" value="ACD47477.1"/>
    <property type="molecule type" value="Genomic_DNA"/>
</dbReference>
<dbReference type="RefSeq" id="WP_001040316.1">
    <property type="nucleotide sequence ID" value="NC_010698.2"/>
</dbReference>
<dbReference type="SMR" id="B2UW12"/>
<dbReference type="KEGG" id="hps:HPSH_00050"/>
<dbReference type="HOGENOM" id="CLU_016503_3_0_7"/>
<dbReference type="GO" id="GO:0005737">
    <property type="term" value="C:cytoplasm"/>
    <property type="evidence" value="ECO:0007669"/>
    <property type="project" value="UniProtKB-SubCell"/>
</dbReference>
<dbReference type="GO" id="GO:0005524">
    <property type="term" value="F:ATP binding"/>
    <property type="evidence" value="ECO:0007669"/>
    <property type="project" value="UniProtKB-UniRule"/>
</dbReference>
<dbReference type="GO" id="GO:0140662">
    <property type="term" value="F:ATP-dependent protein folding chaperone"/>
    <property type="evidence" value="ECO:0007669"/>
    <property type="project" value="InterPro"/>
</dbReference>
<dbReference type="GO" id="GO:0016853">
    <property type="term" value="F:isomerase activity"/>
    <property type="evidence" value="ECO:0007669"/>
    <property type="project" value="UniProtKB-KW"/>
</dbReference>
<dbReference type="GO" id="GO:0051082">
    <property type="term" value="F:unfolded protein binding"/>
    <property type="evidence" value="ECO:0007669"/>
    <property type="project" value="UniProtKB-UniRule"/>
</dbReference>
<dbReference type="GO" id="GO:0042026">
    <property type="term" value="P:protein refolding"/>
    <property type="evidence" value="ECO:0007669"/>
    <property type="project" value="UniProtKB-UniRule"/>
</dbReference>
<dbReference type="CDD" id="cd03344">
    <property type="entry name" value="GroEL"/>
    <property type="match status" value="1"/>
</dbReference>
<dbReference type="FunFam" id="3.50.7.10:FF:000001">
    <property type="entry name" value="60 kDa chaperonin"/>
    <property type="match status" value="1"/>
</dbReference>
<dbReference type="Gene3D" id="3.50.7.10">
    <property type="entry name" value="GroEL"/>
    <property type="match status" value="1"/>
</dbReference>
<dbReference type="Gene3D" id="1.10.560.10">
    <property type="entry name" value="GroEL-like equatorial domain"/>
    <property type="match status" value="1"/>
</dbReference>
<dbReference type="Gene3D" id="3.30.260.10">
    <property type="entry name" value="TCP-1-like chaperonin intermediate domain"/>
    <property type="match status" value="1"/>
</dbReference>
<dbReference type="HAMAP" id="MF_00600">
    <property type="entry name" value="CH60"/>
    <property type="match status" value="1"/>
</dbReference>
<dbReference type="InterPro" id="IPR018370">
    <property type="entry name" value="Chaperonin_Cpn60_CS"/>
</dbReference>
<dbReference type="InterPro" id="IPR001844">
    <property type="entry name" value="Cpn60/GroEL"/>
</dbReference>
<dbReference type="InterPro" id="IPR002423">
    <property type="entry name" value="Cpn60/GroEL/TCP-1"/>
</dbReference>
<dbReference type="InterPro" id="IPR027409">
    <property type="entry name" value="GroEL-like_apical_dom_sf"/>
</dbReference>
<dbReference type="InterPro" id="IPR027413">
    <property type="entry name" value="GROEL-like_equatorial_sf"/>
</dbReference>
<dbReference type="InterPro" id="IPR027410">
    <property type="entry name" value="TCP-1-like_intermed_sf"/>
</dbReference>
<dbReference type="NCBIfam" id="TIGR02348">
    <property type="entry name" value="GroEL"/>
    <property type="match status" value="1"/>
</dbReference>
<dbReference type="NCBIfam" id="NF000592">
    <property type="entry name" value="PRK00013.1"/>
    <property type="match status" value="1"/>
</dbReference>
<dbReference type="NCBIfam" id="NF009487">
    <property type="entry name" value="PRK12849.1"/>
    <property type="match status" value="1"/>
</dbReference>
<dbReference type="NCBIfam" id="NF009488">
    <property type="entry name" value="PRK12850.1"/>
    <property type="match status" value="1"/>
</dbReference>
<dbReference type="NCBIfam" id="NF009489">
    <property type="entry name" value="PRK12851.1"/>
    <property type="match status" value="1"/>
</dbReference>
<dbReference type="PANTHER" id="PTHR45633">
    <property type="entry name" value="60 KDA HEAT SHOCK PROTEIN, MITOCHONDRIAL"/>
    <property type="match status" value="1"/>
</dbReference>
<dbReference type="Pfam" id="PF00118">
    <property type="entry name" value="Cpn60_TCP1"/>
    <property type="match status" value="1"/>
</dbReference>
<dbReference type="PRINTS" id="PR00298">
    <property type="entry name" value="CHAPERONIN60"/>
</dbReference>
<dbReference type="SUPFAM" id="SSF52029">
    <property type="entry name" value="GroEL apical domain-like"/>
    <property type="match status" value="1"/>
</dbReference>
<dbReference type="SUPFAM" id="SSF48592">
    <property type="entry name" value="GroEL equatorial domain-like"/>
    <property type="match status" value="2"/>
</dbReference>
<dbReference type="PROSITE" id="PS00296">
    <property type="entry name" value="CHAPERONINS_CPN60"/>
    <property type="match status" value="1"/>
</dbReference>